<keyword id="KW-0678">Repressor</keyword>
<keyword id="KW-0346">Stress response</keyword>
<keyword id="KW-0804">Transcription</keyword>
<keyword id="KW-0805">Transcription regulation</keyword>
<reference key="1">
    <citation type="journal article" date="2003" name="Mol. Microbiol.">
        <title>Genome-based analysis of virulence genes in a non-biofilm-forming Staphylococcus epidermidis strain (ATCC 12228).</title>
        <authorList>
            <person name="Zhang Y.-Q."/>
            <person name="Ren S.-X."/>
            <person name="Li H.-L."/>
            <person name="Wang Y.-X."/>
            <person name="Fu G."/>
            <person name="Yang J."/>
            <person name="Qin Z.-Q."/>
            <person name="Miao Y.-G."/>
            <person name="Wang W.-Y."/>
            <person name="Chen R.-S."/>
            <person name="Shen Y."/>
            <person name="Chen Z."/>
            <person name="Yuan Z.-H."/>
            <person name="Zhao G.-P."/>
            <person name="Qu D."/>
            <person name="Danchin A."/>
            <person name="Wen Y.-M."/>
        </authorList>
    </citation>
    <scope>NUCLEOTIDE SEQUENCE [LARGE SCALE GENOMIC DNA]</scope>
    <source>
        <strain>ATCC 12228 / FDA PCI 1200</strain>
    </source>
</reference>
<accession>Q8CP15</accession>
<name>HRCA_STAES</name>
<evidence type="ECO:0000255" key="1">
    <source>
        <dbReference type="HAMAP-Rule" id="MF_00081"/>
    </source>
</evidence>
<gene>
    <name evidence="1" type="primary">hrcA</name>
    <name type="ordered locus">SE_1269</name>
</gene>
<sequence>MITKRQLSILNAIVEDYVDFGQPIGSKTLIHRHHLDVSPATIRNEMKQLEEMHFIEKTHTSSGRVPSESGIRYYVNRLLEQTSHQSQNKIQRLNQLLIENHYDSSTALTNFAHELSMKSQYATLVVRPNHKQDVINDIHLIRANNHLIILVMVFSSGHVENIHFVSHAQLNNINLNKIANFLTEHFSFNRKVLTQNIESYFSQKEELLLANEVVEMINLQIGNQSNSIYMGGKVKLIDALNESNVSSIQPILQYIESNKITELLEDISTSQINVRIGKEIDDSLSDISIVTSQYHFDESLKGQIAVIGPTAMHYQNVIQLLNRIW</sequence>
<feature type="chain" id="PRO_0000182532" description="Heat-inducible transcription repressor HrcA">
    <location>
        <begin position="1"/>
        <end position="325"/>
    </location>
</feature>
<proteinExistence type="inferred from homology"/>
<dbReference type="EMBL" id="AE015929">
    <property type="protein sequence ID" value="AAO04868.1"/>
    <property type="molecule type" value="Genomic_DNA"/>
</dbReference>
<dbReference type="RefSeq" id="NP_764824.1">
    <property type="nucleotide sequence ID" value="NC_004461.1"/>
</dbReference>
<dbReference type="RefSeq" id="WP_001831038.1">
    <property type="nucleotide sequence ID" value="NZ_WBME01000008.1"/>
</dbReference>
<dbReference type="SMR" id="Q8CP15"/>
<dbReference type="GeneID" id="50018615"/>
<dbReference type="KEGG" id="sep:SE_1269"/>
<dbReference type="PATRIC" id="fig|176280.10.peg.1238"/>
<dbReference type="eggNOG" id="COG1420">
    <property type="taxonomic scope" value="Bacteria"/>
</dbReference>
<dbReference type="HOGENOM" id="CLU_050019_1_0_9"/>
<dbReference type="OrthoDB" id="9783139at2"/>
<dbReference type="Proteomes" id="UP000001411">
    <property type="component" value="Chromosome"/>
</dbReference>
<dbReference type="GO" id="GO:0003677">
    <property type="term" value="F:DNA binding"/>
    <property type="evidence" value="ECO:0007669"/>
    <property type="project" value="InterPro"/>
</dbReference>
<dbReference type="GO" id="GO:0045892">
    <property type="term" value="P:negative regulation of DNA-templated transcription"/>
    <property type="evidence" value="ECO:0007669"/>
    <property type="project" value="UniProtKB-UniRule"/>
</dbReference>
<dbReference type="Gene3D" id="3.30.450.40">
    <property type="match status" value="1"/>
</dbReference>
<dbReference type="Gene3D" id="3.30.390.60">
    <property type="entry name" value="Heat-inducible transcription repressor hrca homolog, domain 3"/>
    <property type="match status" value="1"/>
</dbReference>
<dbReference type="Gene3D" id="1.10.10.10">
    <property type="entry name" value="Winged helix-like DNA-binding domain superfamily/Winged helix DNA-binding domain"/>
    <property type="match status" value="1"/>
</dbReference>
<dbReference type="HAMAP" id="MF_00081">
    <property type="entry name" value="HrcA"/>
    <property type="match status" value="1"/>
</dbReference>
<dbReference type="InterPro" id="IPR029016">
    <property type="entry name" value="GAF-like_dom_sf"/>
</dbReference>
<dbReference type="InterPro" id="IPR002571">
    <property type="entry name" value="HrcA"/>
</dbReference>
<dbReference type="InterPro" id="IPR021153">
    <property type="entry name" value="HrcA_C"/>
</dbReference>
<dbReference type="InterPro" id="IPR036388">
    <property type="entry name" value="WH-like_DNA-bd_sf"/>
</dbReference>
<dbReference type="InterPro" id="IPR036390">
    <property type="entry name" value="WH_DNA-bd_sf"/>
</dbReference>
<dbReference type="InterPro" id="IPR023120">
    <property type="entry name" value="WHTH_transcript_rep_HrcA_IDD"/>
</dbReference>
<dbReference type="NCBIfam" id="TIGR00331">
    <property type="entry name" value="hrcA"/>
    <property type="match status" value="1"/>
</dbReference>
<dbReference type="PANTHER" id="PTHR34824">
    <property type="entry name" value="HEAT-INDUCIBLE TRANSCRIPTION REPRESSOR HRCA"/>
    <property type="match status" value="1"/>
</dbReference>
<dbReference type="PANTHER" id="PTHR34824:SF1">
    <property type="entry name" value="HEAT-INDUCIBLE TRANSCRIPTION REPRESSOR HRCA"/>
    <property type="match status" value="1"/>
</dbReference>
<dbReference type="Pfam" id="PF01628">
    <property type="entry name" value="HrcA"/>
    <property type="match status" value="1"/>
</dbReference>
<dbReference type="PIRSF" id="PIRSF005485">
    <property type="entry name" value="HrcA"/>
    <property type="match status" value="1"/>
</dbReference>
<dbReference type="SUPFAM" id="SSF55781">
    <property type="entry name" value="GAF domain-like"/>
    <property type="match status" value="1"/>
</dbReference>
<dbReference type="SUPFAM" id="SSF46785">
    <property type="entry name" value="Winged helix' DNA-binding domain"/>
    <property type="match status" value="1"/>
</dbReference>
<protein>
    <recommendedName>
        <fullName evidence="1">Heat-inducible transcription repressor HrcA</fullName>
    </recommendedName>
</protein>
<organism>
    <name type="scientific">Staphylococcus epidermidis (strain ATCC 12228 / FDA PCI 1200)</name>
    <dbReference type="NCBI Taxonomy" id="176280"/>
    <lineage>
        <taxon>Bacteria</taxon>
        <taxon>Bacillati</taxon>
        <taxon>Bacillota</taxon>
        <taxon>Bacilli</taxon>
        <taxon>Bacillales</taxon>
        <taxon>Staphylococcaceae</taxon>
        <taxon>Staphylococcus</taxon>
    </lineage>
</organism>
<comment type="function">
    <text evidence="1">Negative regulator of class I heat shock genes (grpE-dnaK-dnaJ and groELS operons). Prevents heat-shock induction of these operons.</text>
</comment>
<comment type="similarity">
    <text evidence="1">Belongs to the HrcA family.</text>
</comment>